<gene>
    <name evidence="1" type="primary">mnmA</name>
    <name type="ordered locus">Gura_1492</name>
</gene>
<evidence type="ECO:0000255" key="1">
    <source>
        <dbReference type="HAMAP-Rule" id="MF_00144"/>
    </source>
</evidence>
<feature type="chain" id="PRO_0000349649" description="tRNA-specific 2-thiouridylase MnmA">
    <location>
        <begin position="1"/>
        <end position="375"/>
    </location>
</feature>
<feature type="region of interest" description="Interaction with tRNA" evidence="1">
    <location>
        <begin position="158"/>
        <end position="160"/>
    </location>
</feature>
<feature type="region of interest" description="Interaction with tRNA" evidence="1">
    <location>
        <begin position="313"/>
        <end position="314"/>
    </location>
</feature>
<feature type="active site" description="Nucleophile" evidence="1">
    <location>
        <position position="111"/>
    </location>
</feature>
<feature type="active site" description="Cysteine persulfide intermediate" evidence="1">
    <location>
        <position position="208"/>
    </location>
</feature>
<feature type="binding site" evidence="1">
    <location>
        <begin position="13"/>
        <end position="20"/>
    </location>
    <ligand>
        <name>ATP</name>
        <dbReference type="ChEBI" id="CHEBI:30616"/>
    </ligand>
</feature>
<feature type="binding site" evidence="1">
    <location>
        <position position="39"/>
    </location>
    <ligand>
        <name>ATP</name>
        <dbReference type="ChEBI" id="CHEBI:30616"/>
    </ligand>
</feature>
<feature type="binding site" evidence="1">
    <location>
        <position position="135"/>
    </location>
    <ligand>
        <name>ATP</name>
        <dbReference type="ChEBI" id="CHEBI:30616"/>
    </ligand>
</feature>
<feature type="site" description="Interaction with tRNA" evidence="1">
    <location>
        <position position="136"/>
    </location>
</feature>
<feature type="site" description="Interaction with tRNA" evidence="1">
    <location>
        <position position="346"/>
    </location>
</feature>
<feature type="disulfide bond" description="Alternate" evidence="1">
    <location>
        <begin position="111"/>
        <end position="208"/>
    </location>
</feature>
<keyword id="KW-0067">ATP-binding</keyword>
<keyword id="KW-0963">Cytoplasm</keyword>
<keyword id="KW-1015">Disulfide bond</keyword>
<keyword id="KW-0547">Nucleotide-binding</keyword>
<keyword id="KW-1185">Reference proteome</keyword>
<keyword id="KW-0694">RNA-binding</keyword>
<keyword id="KW-0808">Transferase</keyword>
<keyword id="KW-0819">tRNA processing</keyword>
<keyword id="KW-0820">tRNA-binding</keyword>
<accession>A5GE36</accession>
<name>MNMA_GEOUR</name>
<organism>
    <name type="scientific">Geotalea uraniireducens (strain Rf4)</name>
    <name type="common">Geobacter uraniireducens</name>
    <dbReference type="NCBI Taxonomy" id="351605"/>
    <lineage>
        <taxon>Bacteria</taxon>
        <taxon>Pseudomonadati</taxon>
        <taxon>Thermodesulfobacteriota</taxon>
        <taxon>Desulfuromonadia</taxon>
        <taxon>Geobacterales</taxon>
        <taxon>Geobacteraceae</taxon>
        <taxon>Geotalea</taxon>
    </lineage>
</organism>
<reference key="1">
    <citation type="submission" date="2007-05" db="EMBL/GenBank/DDBJ databases">
        <title>Complete sequence of Geobacter uraniireducens Rf4.</title>
        <authorList>
            <consortium name="US DOE Joint Genome Institute"/>
            <person name="Copeland A."/>
            <person name="Lucas S."/>
            <person name="Lapidus A."/>
            <person name="Barry K."/>
            <person name="Detter J.C."/>
            <person name="Glavina del Rio T."/>
            <person name="Hammon N."/>
            <person name="Israni S."/>
            <person name="Dalin E."/>
            <person name="Tice H."/>
            <person name="Pitluck S."/>
            <person name="Chertkov O."/>
            <person name="Brettin T."/>
            <person name="Bruce D."/>
            <person name="Han C."/>
            <person name="Schmutz J."/>
            <person name="Larimer F."/>
            <person name="Land M."/>
            <person name="Hauser L."/>
            <person name="Kyrpides N."/>
            <person name="Mikhailova N."/>
            <person name="Shelobolina E."/>
            <person name="Aklujkar M."/>
            <person name="Lovley D."/>
            <person name="Richardson P."/>
        </authorList>
    </citation>
    <scope>NUCLEOTIDE SEQUENCE [LARGE SCALE GENOMIC DNA]</scope>
    <source>
        <strain>ATCC BAA-1134 / JCM 13001 / Rf4</strain>
    </source>
</reference>
<sequence>MVKNNKRKRVVIAMSGGVDSSVAAALLKEEGHEVIGISMQVWDYTRFTAEEGEKFDTCCSLDDIHDARRVAEQLEIPFYVVNFEEEFQNLVIDDFVNEYLLGRTPNPCVRCNQWIKFELLLKKARGLGADMIATGHYARTEQDADGRYRLMKGVDPAKDQSYFLFTLTQEQLAMTLFPLGGMTKQEVRALAAGYGLRVAEKGESQEICFVPDNDYVRFIEEERGKQLLSGNIVDRKGKVLGVHDGTYRYTVGQRKGLGIAHPEPLYVLGVDAARKEVTVGPRDALYSDGLIATAINWIAPTPETAIEASCKIRYRHHPIPCRILPLADNRAEVRFTEREKSVTPGQAVVFYDGDTVLGGGWIEHAVNTKTAVSHE</sequence>
<protein>
    <recommendedName>
        <fullName evidence="1">tRNA-specific 2-thiouridylase MnmA</fullName>
        <ecNumber evidence="1">2.8.1.13</ecNumber>
    </recommendedName>
</protein>
<proteinExistence type="inferred from homology"/>
<comment type="function">
    <text evidence="1">Catalyzes the 2-thiolation of uridine at the wobble position (U34) of tRNA, leading to the formation of s(2)U34.</text>
</comment>
<comment type="catalytic activity">
    <reaction evidence="1">
        <text>S-sulfanyl-L-cysteinyl-[protein] + uridine(34) in tRNA + AH2 + ATP = 2-thiouridine(34) in tRNA + L-cysteinyl-[protein] + A + AMP + diphosphate + H(+)</text>
        <dbReference type="Rhea" id="RHEA:47032"/>
        <dbReference type="Rhea" id="RHEA-COMP:10131"/>
        <dbReference type="Rhea" id="RHEA-COMP:11726"/>
        <dbReference type="Rhea" id="RHEA-COMP:11727"/>
        <dbReference type="Rhea" id="RHEA-COMP:11728"/>
        <dbReference type="ChEBI" id="CHEBI:13193"/>
        <dbReference type="ChEBI" id="CHEBI:15378"/>
        <dbReference type="ChEBI" id="CHEBI:17499"/>
        <dbReference type="ChEBI" id="CHEBI:29950"/>
        <dbReference type="ChEBI" id="CHEBI:30616"/>
        <dbReference type="ChEBI" id="CHEBI:33019"/>
        <dbReference type="ChEBI" id="CHEBI:61963"/>
        <dbReference type="ChEBI" id="CHEBI:65315"/>
        <dbReference type="ChEBI" id="CHEBI:87170"/>
        <dbReference type="ChEBI" id="CHEBI:456215"/>
        <dbReference type="EC" id="2.8.1.13"/>
    </reaction>
</comment>
<comment type="subcellular location">
    <subcellularLocation>
        <location evidence="1">Cytoplasm</location>
    </subcellularLocation>
</comment>
<comment type="similarity">
    <text evidence="1">Belongs to the MnmA/TRMU family.</text>
</comment>
<dbReference type="EC" id="2.8.1.13" evidence="1"/>
<dbReference type="EMBL" id="CP000698">
    <property type="protein sequence ID" value="ABQ25691.1"/>
    <property type="molecule type" value="Genomic_DNA"/>
</dbReference>
<dbReference type="RefSeq" id="WP_011938405.1">
    <property type="nucleotide sequence ID" value="NC_009483.1"/>
</dbReference>
<dbReference type="SMR" id="A5GE36"/>
<dbReference type="STRING" id="351605.Gura_1492"/>
<dbReference type="KEGG" id="gur:Gura_1492"/>
<dbReference type="HOGENOM" id="CLU_035188_0_0_7"/>
<dbReference type="OrthoDB" id="9800696at2"/>
<dbReference type="Proteomes" id="UP000006695">
    <property type="component" value="Chromosome"/>
</dbReference>
<dbReference type="GO" id="GO:0005737">
    <property type="term" value="C:cytoplasm"/>
    <property type="evidence" value="ECO:0007669"/>
    <property type="project" value="UniProtKB-SubCell"/>
</dbReference>
<dbReference type="GO" id="GO:0005524">
    <property type="term" value="F:ATP binding"/>
    <property type="evidence" value="ECO:0007669"/>
    <property type="project" value="UniProtKB-KW"/>
</dbReference>
<dbReference type="GO" id="GO:0000049">
    <property type="term" value="F:tRNA binding"/>
    <property type="evidence" value="ECO:0007669"/>
    <property type="project" value="UniProtKB-KW"/>
</dbReference>
<dbReference type="GO" id="GO:0103016">
    <property type="term" value="F:tRNA-uridine 2-sulfurtransferase activity"/>
    <property type="evidence" value="ECO:0007669"/>
    <property type="project" value="UniProtKB-EC"/>
</dbReference>
<dbReference type="GO" id="GO:0002143">
    <property type="term" value="P:tRNA wobble position uridine thiolation"/>
    <property type="evidence" value="ECO:0007669"/>
    <property type="project" value="TreeGrafter"/>
</dbReference>
<dbReference type="CDD" id="cd01998">
    <property type="entry name" value="MnmA_TRMU-like"/>
    <property type="match status" value="1"/>
</dbReference>
<dbReference type="FunFam" id="2.40.30.10:FF:000023">
    <property type="entry name" value="tRNA-specific 2-thiouridylase MnmA"/>
    <property type="match status" value="1"/>
</dbReference>
<dbReference type="FunFam" id="3.40.50.620:FF:000115">
    <property type="entry name" value="tRNA-specific 2-thiouridylase MnmA"/>
    <property type="match status" value="1"/>
</dbReference>
<dbReference type="Gene3D" id="2.30.30.280">
    <property type="entry name" value="Adenine nucleotide alpha hydrolases-like domains"/>
    <property type="match status" value="1"/>
</dbReference>
<dbReference type="Gene3D" id="3.40.50.620">
    <property type="entry name" value="HUPs"/>
    <property type="match status" value="1"/>
</dbReference>
<dbReference type="Gene3D" id="2.40.30.10">
    <property type="entry name" value="Translation factors"/>
    <property type="match status" value="1"/>
</dbReference>
<dbReference type="HAMAP" id="MF_00144">
    <property type="entry name" value="tRNA_thiouridyl_MnmA"/>
    <property type="match status" value="1"/>
</dbReference>
<dbReference type="InterPro" id="IPR004506">
    <property type="entry name" value="MnmA-like"/>
</dbReference>
<dbReference type="InterPro" id="IPR046885">
    <property type="entry name" value="MnmA-like_C"/>
</dbReference>
<dbReference type="InterPro" id="IPR046884">
    <property type="entry name" value="MnmA-like_central"/>
</dbReference>
<dbReference type="InterPro" id="IPR023382">
    <property type="entry name" value="MnmA-like_central_sf"/>
</dbReference>
<dbReference type="InterPro" id="IPR014729">
    <property type="entry name" value="Rossmann-like_a/b/a_fold"/>
</dbReference>
<dbReference type="NCBIfam" id="NF001138">
    <property type="entry name" value="PRK00143.1"/>
    <property type="match status" value="1"/>
</dbReference>
<dbReference type="NCBIfam" id="TIGR00420">
    <property type="entry name" value="trmU"/>
    <property type="match status" value="1"/>
</dbReference>
<dbReference type="PANTHER" id="PTHR11933:SF5">
    <property type="entry name" value="MITOCHONDRIAL TRNA-SPECIFIC 2-THIOURIDYLASE 1"/>
    <property type="match status" value="1"/>
</dbReference>
<dbReference type="PANTHER" id="PTHR11933">
    <property type="entry name" value="TRNA 5-METHYLAMINOMETHYL-2-THIOURIDYLATE -METHYLTRANSFERASE"/>
    <property type="match status" value="1"/>
</dbReference>
<dbReference type="Pfam" id="PF03054">
    <property type="entry name" value="tRNA_Me_trans"/>
    <property type="match status" value="1"/>
</dbReference>
<dbReference type="Pfam" id="PF20258">
    <property type="entry name" value="tRNA_Me_trans_C"/>
    <property type="match status" value="1"/>
</dbReference>
<dbReference type="Pfam" id="PF20259">
    <property type="entry name" value="tRNA_Me_trans_M"/>
    <property type="match status" value="1"/>
</dbReference>
<dbReference type="SUPFAM" id="SSF52402">
    <property type="entry name" value="Adenine nucleotide alpha hydrolases-like"/>
    <property type="match status" value="1"/>
</dbReference>